<proteinExistence type="evidence at transcript level"/>
<protein>
    <recommendedName>
        <fullName>Olfactory receptor 8A1</fullName>
    </recommendedName>
    <alternativeName>
        <fullName>OST025</fullName>
    </alternativeName>
    <alternativeName>
        <fullName>Olfactory receptor OR11-318</fullName>
    </alternativeName>
</protein>
<gene>
    <name type="primary">OR8A1</name>
</gene>
<comment type="function">
    <text evidence="3">Odorant receptor.</text>
</comment>
<comment type="subcellular location">
    <subcellularLocation>
        <location>Cell membrane</location>
        <topology>Multi-pass membrane protein</topology>
    </subcellularLocation>
</comment>
<comment type="similarity">
    <text evidence="2">Belongs to the G-protein coupled receptor 1 family.</text>
</comment>
<comment type="sequence caution" evidence="3">
    <conflict type="erroneous initiation">
        <sequence resource="EMBL-CDS" id="BAC06052"/>
    </conflict>
</comment>
<comment type="online information" name="Human Olfactory Receptor Data Exploratorium (HORDE)">
    <link uri="http://genome.weizmann.ac.il/horde/card/index/symbol:OR8A1"/>
</comment>
<organism>
    <name type="scientific">Homo sapiens</name>
    <name type="common">Human</name>
    <dbReference type="NCBI Taxonomy" id="9606"/>
    <lineage>
        <taxon>Eukaryota</taxon>
        <taxon>Metazoa</taxon>
        <taxon>Chordata</taxon>
        <taxon>Craniata</taxon>
        <taxon>Vertebrata</taxon>
        <taxon>Euteleostomi</taxon>
        <taxon>Mammalia</taxon>
        <taxon>Eutheria</taxon>
        <taxon>Euarchontoglires</taxon>
        <taxon>Primates</taxon>
        <taxon>Haplorrhini</taxon>
        <taxon>Catarrhini</taxon>
        <taxon>Hominidae</taxon>
        <taxon>Homo</taxon>
    </lineage>
</organism>
<name>OR8A1_HUMAN</name>
<keyword id="KW-1003">Cell membrane</keyword>
<keyword id="KW-1015">Disulfide bond</keyword>
<keyword id="KW-0297">G-protein coupled receptor</keyword>
<keyword id="KW-0325">Glycoprotein</keyword>
<keyword id="KW-0472">Membrane</keyword>
<keyword id="KW-0552">Olfaction</keyword>
<keyword id="KW-0675">Receptor</keyword>
<keyword id="KW-1185">Reference proteome</keyword>
<keyword id="KW-0716">Sensory transduction</keyword>
<keyword id="KW-0807">Transducer</keyword>
<keyword id="KW-0812">Transmembrane</keyword>
<keyword id="KW-1133">Transmembrane helix</keyword>
<reference key="1">
    <citation type="submission" date="2001-07" db="EMBL/GenBank/DDBJ databases">
        <title>Genome-wide discovery and analysis of human seven transmembrane helix receptor genes.</title>
        <authorList>
            <person name="Suwa M."/>
            <person name="Sato T."/>
            <person name="Okouchi I."/>
            <person name="Arita M."/>
            <person name="Futami K."/>
            <person name="Matsumoto S."/>
            <person name="Tsutsumi S."/>
            <person name="Aburatani H."/>
            <person name="Asai K."/>
            <person name="Akiyama Y."/>
        </authorList>
    </citation>
    <scope>NUCLEOTIDE SEQUENCE [GENOMIC DNA]</scope>
</reference>
<reference key="2">
    <citation type="journal article" date="2006" name="Nature">
        <title>Human chromosome 11 DNA sequence and analysis including novel gene identification.</title>
        <authorList>
            <person name="Taylor T.D."/>
            <person name="Noguchi H."/>
            <person name="Totoki Y."/>
            <person name="Toyoda A."/>
            <person name="Kuroki Y."/>
            <person name="Dewar K."/>
            <person name="Lloyd C."/>
            <person name="Itoh T."/>
            <person name="Takeda T."/>
            <person name="Kim D.-W."/>
            <person name="She X."/>
            <person name="Barlow K.F."/>
            <person name="Bloom T."/>
            <person name="Bruford E."/>
            <person name="Chang J.L."/>
            <person name="Cuomo C.A."/>
            <person name="Eichler E."/>
            <person name="FitzGerald M.G."/>
            <person name="Jaffe D.B."/>
            <person name="LaButti K."/>
            <person name="Nicol R."/>
            <person name="Park H.-S."/>
            <person name="Seaman C."/>
            <person name="Sougnez C."/>
            <person name="Yang X."/>
            <person name="Zimmer A.R."/>
            <person name="Zody M.C."/>
            <person name="Birren B.W."/>
            <person name="Nusbaum C."/>
            <person name="Fujiyama A."/>
            <person name="Hattori M."/>
            <person name="Rogers J."/>
            <person name="Lander E.S."/>
            <person name="Sakaki Y."/>
        </authorList>
    </citation>
    <scope>NUCLEOTIDE SEQUENCE [LARGE SCALE GENOMIC DNA]</scope>
</reference>
<reference key="3">
    <citation type="submission" date="2005-07" db="EMBL/GenBank/DDBJ databases">
        <authorList>
            <person name="Mural R.J."/>
            <person name="Istrail S."/>
            <person name="Sutton G.G."/>
            <person name="Florea L."/>
            <person name="Halpern A.L."/>
            <person name="Mobarry C.M."/>
            <person name="Lippert R."/>
            <person name="Walenz B."/>
            <person name="Shatkay H."/>
            <person name="Dew I."/>
            <person name="Miller J.R."/>
            <person name="Flanigan M.J."/>
            <person name="Edwards N.J."/>
            <person name="Bolanos R."/>
            <person name="Fasulo D."/>
            <person name="Halldorsson B.V."/>
            <person name="Hannenhalli S."/>
            <person name="Turner R."/>
            <person name="Yooseph S."/>
            <person name="Lu F."/>
            <person name="Nusskern D.R."/>
            <person name="Shue B.C."/>
            <person name="Zheng X.H."/>
            <person name="Zhong F."/>
            <person name="Delcher A.L."/>
            <person name="Huson D.H."/>
            <person name="Kravitz S.A."/>
            <person name="Mouchard L."/>
            <person name="Reinert K."/>
            <person name="Remington K.A."/>
            <person name="Clark A.G."/>
            <person name="Waterman M.S."/>
            <person name="Eichler E.E."/>
            <person name="Adams M.D."/>
            <person name="Hunkapiller M.W."/>
            <person name="Myers E.W."/>
            <person name="Venter J.C."/>
        </authorList>
    </citation>
    <scope>NUCLEOTIDE SEQUENCE [LARGE SCALE GENOMIC DNA]</scope>
</reference>
<reference key="4">
    <citation type="journal article" date="2004" name="Genome Res.">
        <title>The status, quality, and expansion of the NIH full-length cDNA project: the Mammalian Gene Collection (MGC).</title>
        <authorList>
            <consortium name="The MGC Project Team"/>
        </authorList>
    </citation>
    <scope>NUCLEOTIDE SEQUENCE [LARGE SCALE MRNA]</scope>
</reference>
<reference key="5">
    <citation type="journal article" date="2002" name="Genomics">
        <title>DEFOG: a practical scheme for deciphering families of genes.</title>
        <authorList>
            <person name="Fuchs T."/>
            <person name="Malecova B."/>
            <person name="Linhart C."/>
            <person name="Sharan R."/>
            <person name="Khen M."/>
            <person name="Herwig R."/>
            <person name="Shmulevich D."/>
            <person name="Elkon R."/>
            <person name="Steinfath M."/>
            <person name="O'Brien J.K."/>
            <person name="Radelof U."/>
            <person name="Lehrach H."/>
            <person name="Lancet D."/>
            <person name="Shamir R."/>
        </authorList>
    </citation>
    <scope>NUCLEOTIDE SEQUENCE [GENOMIC DNA] OF 85-299</scope>
</reference>
<reference key="6">
    <citation type="journal article" date="2004" name="Proc. Natl. Acad. Sci. U.S.A.">
        <title>The human olfactory receptor gene family.</title>
        <authorList>
            <person name="Malnic B."/>
            <person name="Godfrey P.A."/>
            <person name="Buck L.B."/>
        </authorList>
    </citation>
    <scope>IDENTIFICATION</scope>
</reference>
<reference key="7">
    <citation type="journal article" date="2004" name="Proc. Natl. Acad. Sci. U.S.A.">
        <authorList>
            <person name="Malnic B."/>
            <person name="Godfrey P.A."/>
            <person name="Buck L.B."/>
        </authorList>
    </citation>
    <scope>ERRATUM OF PUBMED:14983052</scope>
</reference>
<sequence>MGFLSPMHPCRPPTQRRMAAGNHSTVTEFILKGLTKRADLQLPLFLLFLGIYLVTIVGNLGMITLICLNSQLHTPMYYFLSNLSLMDLCYSSVITPKMLVNFVSEKNIISYAGCMSQLYFFLVFVIAECYMLTVMAYDRYVAICHPLLYNIIMSHHTCLLLVAVVYAIGLIGSTIETGLMLKLPYCEHLISHYFCDILPLMKLSCSSTYDVEMTVFFSAGFNIIVTSLTVLVSYTFILSSILGISTTEGRSKAFSTCSSHLAAVGMFYGSTAFMYLKPSTISSLTQENVASVFYTTVIPMLNPLIYSLRNKEVKAAVQKTLRGKLF</sequence>
<evidence type="ECO:0000255" key="1"/>
<evidence type="ECO:0000255" key="2">
    <source>
        <dbReference type="PROSITE-ProRule" id="PRU00521"/>
    </source>
</evidence>
<evidence type="ECO:0000305" key="3"/>
<feature type="chain" id="PRO_0000150653" description="Olfactory receptor 8A1">
    <location>
        <begin position="1"/>
        <end position="326"/>
    </location>
</feature>
<feature type="topological domain" description="Extracellular" evidence="1">
    <location>
        <begin position="1"/>
        <end position="45"/>
    </location>
</feature>
<feature type="transmembrane region" description="Helical; Name=1" evidence="1">
    <location>
        <begin position="46"/>
        <end position="66"/>
    </location>
</feature>
<feature type="topological domain" description="Cytoplasmic" evidence="1">
    <location>
        <begin position="67"/>
        <end position="77"/>
    </location>
</feature>
<feature type="transmembrane region" description="Helical; Name=2" evidence="1">
    <location>
        <begin position="78"/>
        <end position="100"/>
    </location>
</feature>
<feature type="topological domain" description="Extracellular" evidence="1">
    <location>
        <begin position="101"/>
        <end position="116"/>
    </location>
</feature>
<feature type="transmembrane region" description="Helical; Name=3" evidence="1">
    <location>
        <begin position="117"/>
        <end position="137"/>
    </location>
</feature>
<feature type="topological domain" description="Cytoplasmic" evidence="1">
    <location>
        <begin position="138"/>
        <end position="150"/>
    </location>
</feature>
<feature type="transmembrane region" description="Helical; Name=4" evidence="1">
    <location>
        <begin position="151"/>
        <end position="171"/>
    </location>
</feature>
<feature type="topological domain" description="Extracellular" evidence="1">
    <location>
        <begin position="172"/>
        <end position="222"/>
    </location>
</feature>
<feature type="transmembrane region" description="Helical; Name=5" evidence="1">
    <location>
        <begin position="223"/>
        <end position="243"/>
    </location>
</feature>
<feature type="topological domain" description="Cytoplasmic" evidence="1">
    <location>
        <begin position="244"/>
        <end position="260"/>
    </location>
</feature>
<feature type="transmembrane region" description="Helical; Name=6" evidence="1">
    <location>
        <begin position="261"/>
        <end position="281"/>
    </location>
</feature>
<feature type="topological domain" description="Extracellular" evidence="1">
    <location>
        <begin position="282"/>
        <end position="287"/>
    </location>
</feature>
<feature type="transmembrane region" description="Helical; Name=7" evidence="1">
    <location>
        <begin position="288"/>
        <end position="308"/>
    </location>
</feature>
<feature type="topological domain" description="Cytoplasmic" evidence="1">
    <location>
        <begin position="309"/>
        <end position="326"/>
    </location>
</feature>
<feature type="glycosylation site" description="N-linked (GlcNAc...) asparagine" evidence="1">
    <location>
        <position position="22"/>
    </location>
</feature>
<feature type="disulfide bond" evidence="2">
    <location>
        <begin position="114"/>
        <end position="195"/>
    </location>
</feature>
<feature type="sequence variant" id="VAR_062057" description="In dbSNP:rs55861866.">
    <original>T</original>
    <variation>R</variation>
    <location>
        <position position="133"/>
    </location>
</feature>
<feature type="sequence variant" id="VAR_053238" description="In dbSNP:rs12792184.">
    <original>S</original>
    <variation>L</variation>
    <location>
        <position position="218"/>
    </location>
</feature>
<dbReference type="EMBL" id="AB065833">
    <property type="protein sequence ID" value="BAC06052.1"/>
    <property type="status" value="ALT_INIT"/>
    <property type="molecule type" value="Genomic_DNA"/>
</dbReference>
<dbReference type="EMBL" id="AP000916">
    <property type="status" value="NOT_ANNOTATED_CDS"/>
    <property type="molecule type" value="Genomic_DNA"/>
</dbReference>
<dbReference type="EMBL" id="CH471065">
    <property type="protein sequence ID" value="EAW67586.1"/>
    <property type="molecule type" value="Genomic_DNA"/>
</dbReference>
<dbReference type="EMBL" id="BC137194">
    <property type="protein sequence ID" value="AAI37195.1"/>
    <property type="molecule type" value="mRNA"/>
</dbReference>
<dbReference type="EMBL" id="BC137197">
    <property type="protein sequence ID" value="AAI37198.1"/>
    <property type="molecule type" value="mRNA"/>
</dbReference>
<dbReference type="EMBL" id="AF399512">
    <property type="protein sequence ID" value="AAK94997.1"/>
    <property type="molecule type" value="Genomic_DNA"/>
</dbReference>
<dbReference type="EMBL" id="BK004495">
    <property type="protein sequence ID" value="DAA04893.1"/>
    <property type="molecule type" value="Genomic_DNA"/>
</dbReference>
<dbReference type="RefSeq" id="NP_001005194.1">
    <property type="nucleotide sequence ID" value="NM_001005194.1"/>
</dbReference>
<dbReference type="SMR" id="Q8NGG7"/>
<dbReference type="BioGRID" id="133486">
    <property type="interactions" value="2"/>
</dbReference>
<dbReference type="FunCoup" id="Q8NGG7">
    <property type="interactions" value="417"/>
</dbReference>
<dbReference type="STRING" id="9606.ENSP00000492999"/>
<dbReference type="GlyCosmos" id="Q8NGG7">
    <property type="glycosylation" value="1 site, No reported glycans"/>
</dbReference>
<dbReference type="GlyGen" id="Q8NGG7">
    <property type="glycosylation" value="1 site"/>
</dbReference>
<dbReference type="PhosphoSitePlus" id="Q8NGG7"/>
<dbReference type="BioMuta" id="OR8A1"/>
<dbReference type="DMDM" id="212276454"/>
<dbReference type="MassIVE" id="Q8NGG7"/>
<dbReference type="PaxDb" id="9606-ENSP00000284287"/>
<dbReference type="PeptideAtlas" id="Q8NGG7"/>
<dbReference type="Antibodypedia" id="56821">
    <property type="antibodies" value="59 antibodies from 14 providers"/>
</dbReference>
<dbReference type="DNASU" id="390275"/>
<dbReference type="Ensembl" id="ENST00000642111.1">
    <property type="protein sequence ID" value="ENSP00000492999.1"/>
    <property type="gene ID" value="ENSG00000196119.8"/>
</dbReference>
<dbReference type="GeneID" id="390275"/>
<dbReference type="KEGG" id="hsa:390275"/>
<dbReference type="UCSC" id="uc010san.3">
    <property type="organism name" value="human"/>
</dbReference>
<dbReference type="AGR" id="HGNC:8469"/>
<dbReference type="CTD" id="390275"/>
<dbReference type="DisGeNET" id="390275"/>
<dbReference type="GeneCards" id="OR8A1"/>
<dbReference type="HGNC" id="HGNC:8469">
    <property type="gene designation" value="OR8A1"/>
</dbReference>
<dbReference type="HPA" id="ENSG00000196119">
    <property type="expression patterns" value="Not detected"/>
</dbReference>
<dbReference type="neXtProt" id="NX_Q8NGG7"/>
<dbReference type="OpenTargets" id="ENSG00000196119"/>
<dbReference type="PharmGKB" id="PA32744"/>
<dbReference type="VEuPathDB" id="HostDB:ENSG00000196119"/>
<dbReference type="eggNOG" id="ENOG502T9KS">
    <property type="taxonomic scope" value="Eukaryota"/>
</dbReference>
<dbReference type="GeneTree" id="ENSGT01040000240383"/>
<dbReference type="HOGENOM" id="CLU_012526_1_0_1"/>
<dbReference type="InParanoid" id="Q8NGG7"/>
<dbReference type="OrthoDB" id="6151005at2759"/>
<dbReference type="PAN-GO" id="Q8NGG7">
    <property type="GO annotations" value="4 GO annotations based on evolutionary models"/>
</dbReference>
<dbReference type="PhylomeDB" id="Q8NGG7"/>
<dbReference type="TreeFam" id="TF352753"/>
<dbReference type="PathwayCommons" id="Q8NGG7"/>
<dbReference type="Reactome" id="R-HSA-9752946">
    <property type="pathway name" value="Expression and translocation of olfactory receptors"/>
</dbReference>
<dbReference type="BioGRID-ORCS" id="390275">
    <property type="hits" value="65 hits in 754 CRISPR screens"/>
</dbReference>
<dbReference type="GeneWiki" id="OR8A1"/>
<dbReference type="GenomeRNAi" id="390275"/>
<dbReference type="Pharos" id="Q8NGG7">
    <property type="development level" value="Tdark"/>
</dbReference>
<dbReference type="PRO" id="PR:Q8NGG7"/>
<dbReference type="Proteomes" id="UP000005640">
    <property type="component" value="Chromosome 11"/>
</dbReference>
<dbReference type="RNAct" id="Q8NGG7">
    <property type="molecule type" value="protein"/>
</dbReference>
<dbReference type="Bgee" id="ENSG00000196119">
    <property type="expression patterns" value="Expressed in male germ line stem cell (sensu Vertebrata) in testis and 12 other cell types or tissues"/>
</dbReference>
<dbReference type="ExpressionAtlas" id="Q8NGG7">
    <property type="expression patterns" value="baseline and differential"/>
</dbReference>
<dbReference type="GO" id="GO:0005886">
    <property type="term" value="C:plasma membrane"/>
    <property type="evidence" value="ECO:0007669"/>
    <property type="project" value="UniProtKB-SubCell"/>
</dbReference>
<dbReference type="GO" id="GO:0004930">
    <property type="term" value="F:G protein-coupled receptor activity"/>
    <property type="evidence" value="ECO:0007669"/>
    <property type="project" value="UniProtKB-KW"/>
</dbReference>
<dbReference type="GO" id="GO:0005549">
    <property type="term" value="F:odorant binding"/>
    <property type="evidence" value="ECO:0000318"/>
    <property type="project" value="GO_Central"/>
</dbReference>
<dbReference type="GO" id="GO:0004984">
    <property type="term" value="F:olfactory receptor activity"/>
    <property type="evidence" value="ECO:0000318"/>
    <property type="project" value="GO_Central"/>
</dbReference>
<dbReference type="GO" id="GO:0007186">
    <property type="term" value="P:G protein-coupled receptor signaling pathway"/>
    <property type="evidence" value="ECO:0000318"/>
    <property type="project" value="GO_Central"/>
</dbReference>
<dbReference type="GO" id="GO:0007608">
    <property type="term" value="P:sensory perception of smell"/>
    <property type="evidence" value="ECO:0000318"/>
    <property type="project" value="GO_Central"/>
</dbReference>
<dbReference type="CDD" id="cd15406">
    <property type="entry name" value="7tmA_OR8D-like"/>
    <property type="match status" value="1"/>
</dbReference>
<dbReference type="FunFam" id="1.20.1070.10:FF:000004">
    <property type="entry name" value="Olfactory receptor"/>
    <property type="match status" value="1"/>
</dbReference>
<dbReference type="Gene3D" id="1.20.1070.10">
    <property type="entry name" value="Rhodopsin 7-helix transmembrane proteins"/>
    <property type="match status" value="1"/>
</dbReference>
<dbReference type="InterPro" id="IPR000276">
    <property type="entry name" value="GPCR_Rhodpsn"/>
</dbReference>
<dbReference type="InterPro" id="IPR017452">
    <property type="entry name" value="GPCR_Rhodpsn_7TM"/>
</dbReference>
<dbReference type="InterPro" id="IPR000725">
    <property type="entry name" value="Olfact_rcpt"/>
</dbReference>
<dbReference type="PANTHER" id="PTHR48018">
    <property type="entry name" value="OLFACTORY RECEPTOR"/>
    <property type="match status" value="1"/>
</dbReference>
<dbReference type="Pfam" id="PF13853">
    <property type="entry name" value="7tm_4"/>
    <property type="match status" value="1"/>
</dbReference>
<dbReference type="PRINTS" id="PR00237">
    <property type="entry name" value="GPCRRHODOPSN"/>
</dbReference>
<dbReference type="PRINTS" id="PR00245">
    <property type="entry name" value="OLFACTORYR"/>
</dbReference>
<dbReference type="SUPFAM" id="SSF81321">
    <property type="entry name" value="Family A G protein-coupled receptor-like"/>
    <property type="match status" value="1"/>
</dbReference>
<dbReference type="PROSITE" id="PS00237">
    <property type="entry name" value="G_PROTEIN_RECEP_F1_1"/>
    <property type="match status" value="1"/>
</dbReference>
<dbReference type="PROSITE" id="PS50262">
    <property type="entry name" value="G_PROTEIN_RECEP_F1_2"/>
    <property type="match status" value="1"/>
</dbReference>
<accession>Q8NGG7</accession>
<accession>Q6IEW7</accession>
<accession>Q96RC6</accession>